<comment type="function">
    <text evidence="1">Carrier of the growing fatty acid chain in fatty acid biosynthesis.</text>
</comment>
<comment type="pathway">
    <text evidence="1">Lipid metabolism; fatty acid biosynthesis.</text>
</comment>
<comment type="subcellular location">
    <subcellularLocation>
        <location evidence="1">Cytoplasm</location>
    </subcellularLocation>
</comment>
<comment type="PTM">
    <text evidence="1">4'-phosphopantetheine is transferred from CoA to a specific serine of apo-ACP by AcpS. This modification is essential for activity because fatty acids are bound in thioester linkage to the sulfhydryl of the prosthetic group.</text>
</comment>
<comment type="similarity">
    <text evidence="1">Belongs to the acyl carrier protein (ACP) family.</text>
</comment>
<reference key="1">
    <citation type="journal article" date="2008" name="DNA Res.">
        <title>Complete genome sequence and comparative analysis of the wild-type commensal Escherichia coli strain SE11 isolated from a healthy adult.</title>
        <authorList>
            <person name="Oshima K."/>
            <person name="Toh H."/>
            <person name="Ogura Y."/>
            <person name="Sasamoto H."/>
            <person name="Morita H."/>
            <person name="Park S.-H."/>
            <person name="Ooka T."/>
            <person name="Iyoda S."/>
            <person name="Taylor T.D."/>
            <person name="Hayashi T."/>
            <person name="Itoh K."/>
            <person name="Hattori M."/>
        </authorList>
    </citation>
    <scope>NUCLEOTIDE SEQUENCE [LARGE SCALE GENOMIC DNA]</scope>
    <source>
        <strain>SE11</strain>
    </source>
</reference>
<proteinExistence type="inferred from homology"/>
<name>ACP_ECOSE</name>
<keyword id="KW-0963">Cytoplasm</keyword>
<keyword id="KW-0275">Fatty acid biosynthesis</keyword>
<keyword id="KW-0276">Fatty acid metabolism</keyword>
<keyword id="KW-0444">Lipid biosynthesis</keyword>
<keyword id="KW-0443">Lipid metabolism</keyword>
<keyword id="KW-0596">Phosphopantetheine</keyword>
<keyword id="KW-0597">Phosphoprotein</keyword>
<feature type="chain" id="PRO_1000139025" description="Acyl carrier protein">
    <location>
        <begin position="1"/>
        <end position="78"/>
    </location>
</feature>
<feature type="domain" description="Carrier" evidence="2">
    <location>
        <begin position="2"/>
        <end position="77"/>
    </location>
</feature>
<feature type="modified residue" description="O-(pantetheine 4'-phosphoryl)serine" evidence="2">
    <location>
        <position position="37"/>
    </location>
</feature>
<sequence>MSTIEERVKKIIGEQLGVKQEEVTNNASFVEDLGADSLDTVELVMALEEEFDTEIPDEEAEKITTVQAAIDYINGHQA</sequence>
<protein>
    <recommendedName>
        <fullName evidence="1">Acyl carrier protein</fullName>
        <shortName evidence="1">ACP</shortName>
    </recommendedName>
</protein>
<organism>
    <name type="scientific">Escherichia coli (strain SE11)</name>
    <dbReference type="NCBI Taxonomy" id="409438"/>
    <lineage>
        <taxon>Bacteria</taxon>
        <taxon>Pseudomonadati</taxon>
        <taxon>Pseudomonadota</taxon>
        <taxon>Gammaproteobacteria</taxon>
        <taxon>Enterobacterales</taxon>
        <taxon>Enterobacteriaceae</taxon>
        <taxon>Escherichia</taxon>
    </lineage>
</organism>
<accession>B6I9H1</accession>
<evidence type="ECO:0000255" key="1">
    <source>
        <dbReference type="HAMAP-Rule" id="MF_01217"/>
    </source>
</evidence>
<evidence type="ECO:0000255" key="2">
    <source>
        <dbReference type="PROSITE-ProRule" id="PRU00258"/>
    </source>
</evidence>
<dbReference type="EMBL" id="AP009240">
    <property type="protein sequence ID" value="BAG76682.1"/>
    <property type="molecule type" value="Genomic_DNA"/>
</dbReference>
<dbReference type="RefSeq" id="WP_000103754.1">
    <property type="nucleotide sequence ID" value="NC_011415.1"/>
</dbReference>
<dbReference type="SMR" id="B6I9H1"/>
<dbReference type="GeneID" id="98387866"/>
<dbReference type="KEGG" id="ecy:ECSE_1158"/>
<dbReference type="HOGENOM" id="CLU_108696_5_1_6"/>
<dbReference type="UniPathway" id="UPA00094"/>
<dbReference type="Proteomes" id="UP000008199">
    <property type="component" value="Chromosome"/>
</dbReference>
<dbReference type="GO" id="GO:0005829">
    <property type="term" value="C:cytosol"/>
    <property type="evidence" value="ECO:0007669"/>
    <property type="project" value="TreeGrafter"/>
</dbReference>
<dbReference type="GO" id="GO:0016020">
    <property type="term" value="C:membrane"/>
    <property type="evidence" value="ECO:0007669"/>
    <property type="project" value="GOC"/>
</dbReference>
<dbReference type="GO" id="GO:0000035">
    <property type="term" value="F:acyl binding"/>
    <property type="evidence" value="ECO:0007669"/>
    <property type="project" value="TreeGrafter"/>
</dbReference>
<dbReference type="GO" id="GO:0000036">
    <property type="term" value="F:acyl carrier activity"/>
    <property type="evidence" value="ECO:0007669"/>
    <property type="project" value="UniProtKB-UniRule"/>
</dbReference>
<dbReference type="GO" id="GO:0009245">
    <property type="term" value="P:lipid A biosynthetic process"/>
    <property type="evidence" value="ECO:0007669"/>
    <property type="project" value="TreeGrafter"/>
</dbReference>
<dbReference type="FunFam" id="1.10.1200.10:FF:000001">
    <property type="entry name" value="Acyl carrier protein"/>
    <property type="match status" value="1"/>
</dbReference>
<dbReference type="Gene3D" id="1.10.1200.10">
    <property type="entry name" value="ACP-like"/>
    <property type="match status" value="1"/>
</dbReference>
<dbReference type="HAMAP" id="MF_01217">
    <property type="entry name" value="Acyl_carrier"/>
    <property type="match status" value="1"/>
</dbReference>
<dbReference type="InterPro" id="IPR003231">
    <property type="entry name" value="ACP"/>
</dbReference>
<dbReference type="InterPro" id="IPR036736">
    <property type="entry name" value="ACP-like_sf"/>
</dbReference>
<dbReference type="InterPro" id="IPR009081">
    <property type="entry name" value="PP-bd_ACP"/>
</dbReference>
<dbReference type="InterPro" id="IPR006162">
    <property type="entry name" value="Ppantetheine_attach_site"/>
</dbReference>
<dbReference type="NCBIfam" id="TIGR00517">
    <property type="entry name" value="acyl_carrier"/>
    <property type="match status" value="1"/>
</dbReference>
<dbReference type="NCBIfam" id="NF002148">
    <property type="entry name" value="PRK00982.1-2"/>
    <property type="match status" value="1"/>
</dbReference>
<dbReference type="NCBIfam" id="NF002149">
    <property type="entry name" value="PRK00982.1-3"/>
    <property type="match status" value="1"/>
</dbReference>
<dbReference type="NCBIfam" id="NF002150">
    <property type="entry name" value="PRK00982.1-4"/>
    <property type="match status" value="1"/>
</dbReference>
<dbReference type="NCBIfam" id="NF002151">
    <property type="entry name" value="PRK00982.1-5"/>
    <property type="match status" value="1"/>
</dbReference>
<dbReference type="PANTHER" id="PTHR20863">
    <property type="entry name" value="ACYL CARRIER PROTEIN"/>
    <property type="match status" value="1"/>
</dbReference>
<dbReference type="PANTHER" id="PTHR20863:SF76">
    <property type="entry name" value="CARRIER DOMAIN-CONTAINING PROTEIN"/>
    <property type="match status" value="1"/>
</dbReference>
<dbReference type="Pfam" id="PF00550">
    <property type="entry name" value="PP-binding"/>
    <property type="match status" value="1"/>
</dbReference>
<dbReference type="SUPFAM" id="SSF47336">
    <property type="entry name" value="ACP-like"/>
    <property type="match status" value="1"/>
</dbReference>
<dbReference type="PROSITE" id="PS50075">
    <property type="entry name" value="CARRIER"/>
    <property type="match status" value="1"/>
</dbReference>
<dbReference type="PROSITE" id="PS00012">
    <property type="entry name" value="PHOSPHOPANTETHEINE"/>
    <property type="match status" value="1"/>
</dbReference>
<gene>
    <name evidence="1" type="primary">acpP</name>
    <name type="ordered locus">ECSE_1158</name>
</gene>